<proteinExistence type="inferred from homology"/>
<keyword id="KW-0998">Cell outer membrane</keyword>
<keyword id="KW-0449">Lipoprotein</keyword>
<keyword id="KW-0472">Membrane</keyword>
<keyword id="KW-0564">Palmitate</keyword>
<keyword id="KW-1185">Reference proteome</keyword>
<keyword id="KW-0732">Signal</keyword>
<comment type="function">
    <text evidence="1">Together with LptD, is involved in the assembly of lipopolysaccharide (LPS) at the surface of the outer membrane. Required for the proper assembly of LptD. Binds LPS and may serve as the LPS recognition site at the outer membrane.</text>
</comment>
<comment type="subunit">
    <text evidence="1">Component of the lipopolysaccharide transport and assembly complex. Interacts with LptD.</text>
</comment>
<comment type="subcellular location">
    <subcellularLocation>
        <location evidence="1">Cell outer membrane</location>
        <topology evidence="1">Lipid-anchor</topology>
    </subcellularLocation>
</comment>
<comment type="similarity">
    <text evidence="1">Belongs to the LptE lipoprotein family.</text>
</comment>
<organism>
    <name type="scientific">Escherichia coli O45:K1 (strain S88 / ExPEC)</name>
    <dbReference type="NCBI Taxonomy" id="585035"/>
    <lineage>
        <taxon>Bacteria</taxon>
        <taxon>Pseudomonadati</taxon>
        <taxon>Pseudomonadota</taxon>
        <taxon>Gammaproteobacteria</taxon>
        <taxon>Enterobacterales</taxon>
        <taxon>Enterobacteriaceae</taxon>
        <taxon>Escherichia</taxon>
    </lineage>
</organism>
<reference key="1">
    <citation type="journal article" date="2009" name="PLoS Genet.">
        <title>Organised genome dynamics in the Escherichia coli species results in highly diverse adaptive paths.</title>
        <authorList>
            <person name="Touchon M."/>
            <person name="Hoede C."/>
            <person name="Tenaillon O."/>
            <person name="Barbe V."/>
            <person name="Baeriswyl S."/>
            <person name="Bidet P."/>
            <person name="Bingen E."/>
            <person name="Bonacorsi S."/>
            <person name="Bouchier C."/>
            <person name="Bouvet O."/>
            <person name="Calteau A."/>
            <person name="Chiapello H."/>
            <person name="Clermont O."/>
            <person name="Cruveiller S."/>
            <person name="Danchin A."/>
            <person name="Diard M."/>
            <person name="Dossat C."/>
            <person name="Karoui M.E."/>
            <person name="Frapy E."/>
            <person name="Garry L."/>
            <person name="Ghigo J.M."/>
            <person name="Gilles A.M."/>
            <person name="Johnson J."/>
            <person name="Le Bouguenec C."/>
            <person name="Lescat M."/>
            <person name="Mangenot S."/>
            <person name="Martinez-Jehanne V."/>
            <person name="Matic I."/>
            <person name="Nassif X."/>
            <person name="Oztas S."/>
            <person name="Petit M.A."/>
            <person name="Pichon C."/>
            <person name="Rouy Z."/>
            <person name="Ruf C.S."/>
            <person name="Schneider D."/>
            <person name="Tourret J."/>
            <person name="Vacherie B."/>
            <person name="Vallenet D."/>
            <person name="Medigue C."/>
            <person name="Rocha E.P.C."/>
            <person name="Denamur E."/>
        </authorList>
    </citation>
    <scope>NUCLEOTIDE SEQUENCE [LARGE SCALE GENOMIC DNA]</scope>
    <source>
        <strain>S88 / ExPEC</strain>
    </source>
</reference>
<accession>B7MFR4</accession>
<protein>
    <recommendedName>
        <fullName evidence="1">LPS-assembly lipoprotein LptE</fullName>
    </recommendedName>
</protein>
<dbReference type="EMBL" id="CU928161">
    <property type="protein sequence ID" value="CAR02023.1"/>
    <property type="molecule type" value="Genomic_DNA"/>
</dbReference>
<dbReference type="RefSeq" id="WP_001269673.1">
    <property type="nucleotide sequence ID" value="NC_011742.1"/>
</dbReference>
<dbReference type="SMR" id="B7MFR4"/>
<dbReference type="GeneID" id="93776841"/>
<dbReference type="KEGG" id="ecz:ECS88_0683"/>
<dbReference type="HOGENOM" id="CLU_103309_1_1_6"/>
<dbReference type="Proteomes" id="UP000000747">
    <property type="component" value="Chromosome"/>
</dbReference>
<dbReference type="GO" id="GO:0009279">
    <property type="term" value="C:cell outer membrane"/>
    <property type="evidence" value="ECO:0007669"/>
    <property type="project" value="UniProtKB-SubCell"/>
</dbReference>
<dbReference type="GO" id="GO:1990351">
    <property type="term" value="C:transporter complex"/>
    <property type="evidence" value="ECO:0007669"/>
    <property type="project" value="TreeGrafter"/>
</dbReference>
<dbReference type="GO" id="GO:0001530">
    <property type="term" value="F:lipopolysaccharide binding"/>
    <property type="evidence" value="ECO:0007669"/>
    <property type="project" value="TreeGrafter"/>
</dbReference>
<dbReference type="GO" id="GO:0043165">
    <property type="term" value="P:Gram-negative-bacterium-type cell outer membrane assembly"/>
    <property type="evidence" value="ECO:0007669"/>
    <property type="project" value="UniProtKB-UniRule"/>
</dbReference>
<dbReference type="GO" id="GO:0015920">
    <property type="term" value="P:lipopolysaccharide transport"/>
    <property type="evidence" value="ECO:0007669"/>
    <property type="project" value="TreeGrafter"/>
</dbReference>
<dbReference type="FunFam" id="3.30.160.150:FF:000001">
    <property type="entry name" value="LPS-assembly lipoprotein LptE"/>
    <property type="match status" value="1"/>
</dbReference>
<dbReference type="Gene3D" id="3.30.160.150">
    <property type="entry name" value="Lipoprotein like domain"/>
    <property type="match status" value="1"/>
</dbReference>
<dbReference type="HAMAP" id="MF_01186">
    <property type="entry name" value="LPS_assembly_LptE"/>
    <property type="match status" value="1"/>
</dbReference>
<dbReference type="InterPro" id="IPR007485">
    <property type="entry name" value="LPS_assembly_LptE"/>
</dbReference>
<dbReference type="NCBIfam" id="NF008062">
    <property type="entry name" value="PRK10796.1"/>
    <property type="match status" value="1"/>
</dbReference>
<dbReference type="PANTHER" id="PTHR38098">
    <property type="entry name" value="LPS-ASSEMBLY LIPOPROTEIN LPTE"/>
    <property type="match status" value="1"/>
</dbReference>
<dbReference type="PANTHER" id="PTHR38098:SF1">
    <property type="entry name" value="LPS-ASSEMBLY LIPOPROTEIN LPTE"/>
    <property type="match status" value="1"/>
</dbReference>
<dbReference type="Pfam" id="PF04390">
    <property type="entry name" value="LptE"/>
    <property type="match status" value="1"/>
</dbReference>
<dbReference type="PROSITE" id="PS51257">
    <property type="entry name" value="PROKAR_LIPOPROTEIN"/>
    <property type="match status" value="1"/>
</dbReference>
<sequence length="193" mass="21357">MRYLATLLLSLAVLITAGCGWHLRDTTQVPSTMKVMILDSGDPNGPLSRAVRNQLRLNGVELLDKETTRKDVPSLRLGKVSIAKDTASVFRNGQTAEYQMIMTVNATVLIPGRDIYPISAKVFRSFFDNPQMALAKDNEQDMIVKEMYDRAAEQLIRKLPSIRAADIRSDEEQTSTTTDTPATPARVSTTLGN</sequence>
<name>LPTE_ECO45</name>
<evidence type="ECO:0000255" key="1">
    <source>
        <dbReference type="HAMAP-Rule" id="MF_01186"/>
    </source>
</evidence>
<evidence type="ECO:0000256" key="2">
    <source>
        <dbReference type="SAM" id="MobiDB-lite"/>
    </source>
</evidence>
<feature type="signal peptide" evidence="1">
    <location>
        <begin position="1"/>
        <end position="18"/>
    </location>
</feature>
<feature type="chain" id="PRO_1000138266" description="LPS-assembly lipoprotein LptE">
    <location>
        <begin position="19"/>
        <end position="193"/>
    </location>
</feature>
<feature type="region of interest" description="Disordered" evidence="2">
    <location>
        <begin position="166"/>
        <end position="193"/>
    </location>
</feature>
<feature type="compositionally biased region" description="Low complexity" evidence="2">
    <location>
        <begin position="174"/>
        <end position="186"/>
    </location>
</feature>
<feature type="lipid moiety-binding region" description="N-palmitoyl cysteine" evidence="1">
    <location>
        <position position="19"/>
    </location>
</feature>
<feature type="lipid moiety-binding region" description="S-diacylglycerol cysteine" evidence="1">
    <location>
        <position position="19"/>
    </location>
</feature>
<gene>
    <name evidence="1" type="primary">lptE</name>
    <name type="synonym">rlpB</name>
    <name type="ordered locus">ECS88_0683</name>
</gene>